<organism>
    <name type="scientific">Halalkalibacterium halodurans (strain ATCC BAA-125 / DSM 18197 / FERM 7344 / JCM 9153 / C-125)</name>
    <name type="common">Bacillus halodurans</name>
    <dbReference type="NCBI Taxonomy" id="272558"/>
    <lineage>
        <taxon>Bacteria</taxon>
        <taxon>Bacillati</taxon>
        <taxon>Bacillota</taxon>
        <taxon>Bacilli</taxon>
        <taxon>Bacillales</taxon>
        <taxon>Bacillaceae</taxon>
        <taxon>Halalkalibacterium (ex Joshi et al. 2022)</taxon>
    </lineage>
</organism>
<reference key="1">
    <citation type="journal article" date="2000" name="Nucleic Acids Res.">
        <title>Complete genome sequence of the alkaliphilic bacterium Bacillus halodurans and genomic sequence comparison with Bacillus subtilis.</title>
        <authorList>
            <person name="Takami H."/>
            <person name="Nakasone K."/>
            <person name="Takaki Y."/>
            <person name="Maeno G."/>
            <person name="Sasaki R."/>
            <person name="Masui N."/>
            <person name="Fuji F."/>
            <person name="Hirama C."/>
            <person name="Nakamura Y."/>
            <person name="Ogasawara N."/>
            <person name="Kuhara S."/>
            <person name="Horikoshi K."/>
        </authorList>
    </citation>
    <scope>NUCLEOTIDE SEQUENCE [LARGE SCALE GENOMIC DNA]</scope>
    <source>
        <strain>ATCC BAA-125 / DSM 18197 / FERM 7344 / JCM 9153 / C-125</strain>
    </source>
</reference>
<name>FPG_HALH5</name>
<keyword id="KW-0227">DNA damage</keyword>
<keyword id="KW-0234">DNA repair</keyword>
<keyword id="KW-0238">DNA-binding</keyword>
<keyword id="KW-0326">Glycosidase</keyword>
<keyword id="KW-0378">Hydrolase</keyword>
<keyword id="KW-0456">Lyase</keyword>
<keyword id="KW-0479">Metal-binding</keyword>
<keyword id="KW-0511">Multifunctional enzyme</keyword>
<keyword id="KW-1185">Reference proteome</keyword>
<keyword id="KW-0862">Zinc</keyword>
<keyword id="KW-0863">Zinc-finger</keyword>
<accession>Q9K855</accession>
<proteinExistence type="inferred from homology"/>
<gene>
    <name type="primary">mutM</name>
    <name type="synonym">fpg</name>
    <name type="ordered locus">BH3152</name>
</gene>
<evidence type="ECO:0000250" key="1"/>
<evidence type="ECO:0000305" key="2"/>
<protein>
    <recommendedName>
        <fullName>Formamidopyrimidine-DNA glycosylase</fullName>
        <shortName>Fapy-DNA glycosylase</shortName>
        <ecNumber>3.2.2.23</ecNumber>
    </recommendedName>
    <alternativeName>
        <fullName>DNA-(apurinic or apyrimidinic site) lyase MutM</fullName>
        <shortName>AP lyase MutM</shortName>
        <ecNumber>4.2.99.18</ecNumber>
    </alternativeName>
</protein>
<feature type="initiator methionine" description="Removed" evidence="1">
    <location>
        <position position="1"/>
    </location>
</feature>
<feature type="chain" id="PRO_0000170810" description="Formamidopyrimidine-DNA glycosylase">
    <location>
        <begin position="2"/>
        <end position="274"/>
    </location>
</feature>
<feature type="zinc finger region" description="FPG-type">
    <location>
        <begin position="240"/>
        <end position="274"/>
    </location>
</feature>
<feature type="active site" description="Schiff-base intermediate with DNA" evidence="1">
    <location>
        <position position="2"/>
    </location>
</feature>
<feature type="active site" description="Proton donor" evidence="1">
    <location>
        <position position="3"/>
    </location>
</feature>
<feature type="active site" description="Proton donor; for beta-elimination activity" evidence="1">
    <location>
        <position position="60"/>
    </location>
</feature>
<feature type="active site" description="Proton donor; for delta-elimination activity" evidence="1">
    <location>
        <position position="264"/>
    </location>
</feature>
<feature type="binding site" evidence="1">
    <location>
        <position position="93"/>
    </location>
    <ligand>
        <name>DNA</name>
        <dbReference type="ChEBI" id="CHEBI:16991"/>
    </ligand>
</feature>
<feature type="binding site" evidence="1">
    <location>
        <position position="112"/>
    </location>
    <ligand>
        <name>DNA</name>
        <dbReference type="ChEBI" id="CHEBI:16991"/>
    </ligand>
</feature>
<dbReference type="EC" id="3.2.2.23"/>
<dbReference type="EC" id="4.2.99.18"/>
<dbReference type="EMBL" id="BA000004">
    <property type="protein sequence ID" value="BAB06871.1"/>
    <property type="molecule type" value="Genomic_DNA"/>
</dbReference>
<dbReference type="PIR" id="H84043">
    <property type="entry name" value="H84043"/>
</dbReference>
<dbReference type="RefSeq" id="WP_010899295.1">
    <property type="nucleotide sequence ID" value="NC_002570.2"/>
</dbReference>
<dbReference type="SMR" id="Q9K855"/>
<dbReference type="STRING" id="272558.gene:10729064"/>
<dbReference type="GeneID" id="87598672"/>
<dbReference type="KEGG" id="bha:BH3152"/>
<dbReference type="eggNOG" id="COG0266">
    <property type="taxonomic scope" value="Bacteria"/>
</dbReference>
<dbReference type="HOGENOM" id="CLU_038423_1_3_9"/>
<dbReference type="OrthoDB" id="9800855at2"/>
<dbReference type="Proteomes" id="UP000001258">
    <property type="component" value="Chromosome"/>
</dbReference>
<dbReference type="GO" id="GO:0034039">
    <property type="term" value="F:8-oxo-7,8-dihydroguanine DNA N-glycosylase activity"/>
    <property type="evidence" value="ECO:0007669"/>
    <property type="project" value="TreeGrafter"/>
</dbReference>
<dbReference type="GO" id="GO:0140078">
    <property type="term" value="F:class I DNA-(apurinic or apyrimidinic site) endonuclease activity"/>
    <property type="evidence" value="ECO:0007669"/>
    <property type="project" value="UniProtKB-EC"/>
</dbReference>
<dbReference type="GO" id="GO:0003684">
    <property type="term" value="F:damaged DNA binding"/>
    <property type="evidence" value="ECO:0007669"/>
    <property type="project" value="InterPro"/>
</dbReference>
<dbReference type="GO" id="GO:0008270">
    <property type="term" value="F:zinc ion binding"/>
    <property type="evidence" value="ECO:0007669"/>
    <property type="project" value="UniProtKB-UniRule"/>
</dbReference>
<dbReference type="GO" id="GO:0006284">
    <property type="term" value="P:base-excision repair"/>
    <property type="evidence" value="ECO:0007669"/>
    <property type="project" value="InterPro"/>
</dbReference>
<dbReference type="CDD" id="cd08966">
    <property type="entry name" value="EcFpg-like_N"/>
    <property type="match status" value="1"/>
</dbReference>
<dbReference type="FunFam" id="1.10.8.50:FF:000003">
    <property type="entry name" value="Formamidopyrimidine-DNA glycosylase"/>
    <property type="match status" value="1"/>
</dbReference>
<dbReference type="FunFam" id="3.20.190.10:FF:000001">
    <property type="entry name" value="Formamidopyrimidine-DNA glycosylase"/>
    <property type="match status" value="1"/>
</dbReference>
<dbReference type="Gene3D" id="1.10.8.50">
    <property type="match status" value="1"/>
</dbReference>
<dbReference type="Gene3D" id="3.20.190.10">
    <property type="entry name" value="MutM-like, N-terminal"/>
    <property type="match status" value="1"/>
</dbReference>
<dbReference type="HAMAP" id="MF_00103">
    <property type="entry name" value="Fapy_DNA_glycosyl"/>
    <property type="match status" value="1"/>
</dbReference>
<dbReference type="InterPro" id="IPR015886">
    <property type="entry name" value="DNA_glyclase/AP_lyase_DNA-bd"/>
</dbReference>
<dbReference type="InterPro" id="IPR015887">
    <property type="entry name" value="DNA_glyclase_Znf_dom_DNA_BS"/>
</dbReference>
<dbReference type="InterPro" id="IPR020629">
    <property type="entry name" value="Formamido-pyr_DNA_Glyclase"/>
</dbReference>
<dbReference type="InterPro" id="IPR012319">
    <property type="entry name" value="FPG_cat"/>
</dbReference>
<dbReference type="InterPro" id="IPR035937">
    <property type="entry name" value="MutM-like_N-ter"/>
</dbReference>
<dbReference type="InterPro" id="IPR010979">
    <property type="entry name" value="Ribosomal_uS13-like_H2TH"/>
</dbReference>
<dbReference type="InterPro" id="IPR000214">
    <property type="entry name" value="Znf_DNA_glyclase/AP_lyase"/>
</dbReference>
<dbReference type="InterPro" id="IPR010663">
    <property type="entry name" value="Znf_FPG/IleRS"/>
</dbReference>
<dbReference type="NCBIfam" id="TIGR00577">
    <property type="entry name" value="fpg"/>
    <property type="match status" value="1"/>
</dbReference>
<dbReference type="NCBIfam" id="NF002211">
    <property type="entry name" value="PRK01103.1"/>
    <property type="match status" value="1"/>
</dbReference>
<dbReference type="PANTHER" id="PTHR22993">
    <property type="entry name" value="FORMAMIDOPYRIMIDINE-DNA GLYCOSYLASE"/>
    <property type="match status" value="1"/>
</dbReference>
<dbReference type="PANTHER" id="PTHR22993:SF9">
    <property type="entry name" value="FORMAMIDOPYRIMIDINE-DNA GLYCOSYLASE"/>
    <property type="match status" value="1"/>
</dbReference>
<dbReference type="Pfam" id="PF01149">
    <property type="entry name" value="Fapy_DNA_glyco"/>
    <property type="match status" value="1"/>
</dbReference>
<dbReference type="Pfam" id="PF06831">
    <property type="entry name" value="H2TH"/>
    <property type="match status" value="1"/>
</dbReference>
<dbReference type="Pfam" id="PF06827">
    <property type="entry name" value="zf-FPG_IleRS"/>
    <property type="match status" value="1"/>
</dbReference>
<dbReference type="SMART" id="SM00898">
    <property type="entry name" value="Fapy_DNA_glyco"/>
    <property type="match status" value="1"/>
</dbReference>
<dbReference type="SMART" id="SM01232">
    <property type="entry name" value="H2TH"/>
    <property type="match status" value="1"/>
</dbReference>
<dbReference type="SUPFAM" id="SSF57716">
    <property type="entry name" value="Glucocorticoid receptor-like (DNA-binding domain)"/>
    <property type="match status" value="1"/>
</dbReference>
<dbReference type="SUPFAM" id="SSF81624">
    <property type="entry name" value="N-terminal domain of MutM-like DNA repair proteins"/>
    <property type="match status" value="1"/>
</dbReference>
<dbReference type="SUPFAM" id="SSF46946">
    <property type="entry name" value="S13-like H2TH domain"/>
    <property type="match status" value="1"/>
</dbReference>
<dbReference type="PROSITE" id="PS51068">
    <property type="entry name" value="FPG_CAT"/>
    <property type="match status" value="1"/>
</dbReference>
<dbReference type="PROSITE" id="PS01242">
    <property type="entry name" value="ZF_FPG_1"/>
    <property type="match status" value="1"/>
</dbReference>
<dbReference type="PROSITE" id="PS51066">
    <property type="entry name" value="ZF_FPG_2"/>
    <property type="match status" value="1"/>
</dbReference>
<comment type="function">
    <text evidence="1">Involved in base excision repair of DNA damaged by oxidation or by mutagenic agents. Acts as a DNA glycosylase that recognizes and removes damaged bases. Has a preference for oxidized purines, such as 7,8-dihydro-8-oxoguanine (8-oxoG). Has AP (apurinic/apyrimidinic) lyase activity and introduces nicks in the DNA strand. Cleaves the DNA backbone by beta-delta elimination to generate a single-strand break at the site of the removed base with both 3'- and 5'-phosphates (By similarity).</text>
</comment>
<comment type="catalytic activity">
    <reaction>
        <text>Hydrolysis of DNA containing ring-opened 7-methylguanine residues, releasing 2,6-diamino-4-hydroxy-5-(N-methyl)formamidopyrimidine.</text>
        <dbReference type="EC" id="3.2.2.23"/>
    </reaction>
</comment>
<comment type="catalytic activity">
    <reaction>
        <text>2'-deoxyribonucleotide-(2'-deoxyribose 5'-phosphate)-2'-deoxyribonucleotide-DNA = a 3'-end 2'-deoxyribonucleotide-(2,3-dehydro-2,3-deoxyribose 5'-phosphate)-DNA + a 5'-end 5'-phospho-2'-deoxyribonucleoside-DNA + H(+)</text>
        <dbReference type="Rhea" id="RHEA:66592"/>
        <dbReference type="Rhea" id="RHEA-COMP:13180"/>
        <dbReference type="Rhea" id="RHEA-COMP:16897"/>
        <dbReference type="Rhea" id="RHEA-COMP:17067"/>
        <dbReference type="ChEBI" id="CHEBI:15378"/>
        <dbReference type="ChEBI" id="CHEBI:136412"/>
        <dbReference type="ChEBI" id="CHEBI:157695"/>
        <dbReference type="ChEBI" id="CHEBI:167181"/>
        <dbReference type="EC" id="4.2.99.18"/>
    </reaction>
</comment>
<comment type="cofactor">
    <cofactor evidence="1">
        <name>Zn(2+)</name>
        <dbReference type="ChEBI" id="CHEBI:29105"/>
    </cofactor>
    <text evidence="1">Binds 1 zinc ion per subunit.</text>
</comment>
<comment type="subunit">
    <text evidence="1">Monomer.</text>
</comment>
<comment type="similarity">
    <text evidence="2">Belongs to the FPG family.</text>
</comment>
<sequence length="274" mass="30999">MPELPEVETVRRTLAELVIGKTIEQVDVGWAKMIKRPDDVDQFKWLLKGQTIRSMGRRGKFLLFHLDDYTLVSHLRMEGRYGLYQQNESVAKHTHVRFVFGDGTELRYQDVRKFGTMHLFQSGREQMEPPLAKLGVEPFSDQFSAKLLTERLSKTSRKIKSALLDQGIIVGLGNIYVDEALFRARIHPERLAKDVTVAEVKILHQAILNTLTEAVNLGGSSIKSYVNGQGEMGMFQQRLDVYGRKGETCRQCGTPITKTVVGGRGTHFCSVCQK</sequence>